<dbReference type="EC" id="2.5.1.145" evidence="1"/>
<dbReference type="EMBL" id="CP000825">
    <property type="protein sequence ID" value="ABV50156.1"/>
    <property type="molecule type" value="Genomic_DNA"/>
</dbReference>
<dbReference type="RefSeq" id="WP_012007287.1">
    <property type="nucleotide sequence ID" value="NC_009840.1"/>
</dbReference>
<dbReference type="SMR" id="A8G3H5"/>
<dbReference type="STRING" id="93060.P9215_05401"/>
<dbReference type="KEGG" id="pmh:P9215_05401"/>
<dbReference type="eggNOG" id="COG0682">
    <property type="taxonomic scope" value="Bacteria"/>
</dbReference>
<dbReference type="HOGENOM" id="CLU_013386_1_2_3"/>
<dbReference type="OrthoDB" id="871140at2"/>
<dbReference type="UniPathway" id="UPA00664"/>
<dbReference type="Proteomes" id="UP000002014">
    <property type="component" value="Chromosome"/>
</dbReference>
<dbReference type="GO" id="GO:0005886">
    <property type="term" value="C:plasma membrane"/>
    <property type="evidence" value="ECO:0007669"/>
    <property type="project" value="UniProtKB-SubCell"/>
</dbReference>
<dbReference type="GO" id="GO:0008961">
    <property type="term" value="F:phosphatidylglycerol-prolipoprotein diacylglyceryl transferase activity"/>
    <property type="evidence" value="ECO:0007669"/>
    <property type="project" value="UniProtKB-UniRule"/>
</dbReference>
<dbReference type="GO" id="GO:0042158">
    <property type="term" value="P:lipoprotein biosynthetic process"/>
    <property type="evidence" value="ECO:0007669"/>
    <property type="project" value="UniProtKB-UniRule"/>
</dbReference>
<dbReference type="HAMAP" id="MF_01147">
    <property type="entry name" value="Lgt"/>
    <property type="match status" value="1"/>
</dbReference>
<dbReference type="InterPro" id="IPR001640">
    <property type="entry name" value="Lgt"/>
</dbReference>
<dbReference type="NCBIfam" id="TIGR00544">
    <property type="entry name" value="lgt"/>
    <property type="match status" value="1"/>
</dbReference>
<dbReference type="PANTHER" id="PTHR30589:SF0">
    <property type="entry name" value="PHOSPHATIDYLGLYCEROL--PROLIPOPROTEIN DIACYLGLYCERYL TRANSFERASE"/>
    <property type="match status" value="1"/>
</dbReference>
<dbReference type="PANTHER" id="PTHR30589">
    <property type="entry name" value="PROLIPOPROTEIN DIACYLGLYCERYL TRANSFERASE"/>
    <property type="match status" value="1"/>
</dbReference>
<dbReference type="Pfam" id="PF01790">
    <property type="entry name" value="LGT"/>
    <property type="match status" value="1"/>
</dbReference>
<dbReference type="PROSITE" id="PS01311">
    <property type="entry name" value="LGT"/>
    <property type="match status" value="1"/>
</dbReference>
<sequence>MLILQAFIQSPGETFLNLGFITIRWYGLLISVSVLIGLFVSKKLAKARNINPEYISEILPSLIISSILGARAYYVIFEWRQYSGENFFTSFELFNSIIKIPSFFAVWEGGIAIHGGLIGGLISIIYFCKSKNINLKTFIDILIPSIILGQSIGRWGNFFNNEAFGVPTNLPWKLFIPIQNRPLEFLNYEFFHPTFLYESLWNLLIFIALIIIFNKQNKTDFFRPGFISFLYLISYSFGRFWIEGLRTDPLCIGGLPPFCDGGIRMAQFISIFLFSSGLIGIFFLRLRSCNGKNRKNG</sequence>
<accession>A8G3H5</accession>
<organism>
    <name type="scientific">Prochlorococcus marinus (strain MIT 9215)</name>
    <dbReference type="NCBI Taxonomy" id="93060"/>
    <lineage>
        <taxon>Bacteria</taxon>
        <taxon>Bacillati</taxon>
        <taxon>Cyanobacteriota</taxon>
        <taxon>Cyanophyceae</taxon>
        <taxon>Synechococcales</taxon>
        <taxon>Prochlorococcaceae</taxon>
        <taxon>Prochlorococcus</taxon>
    </lineage>
</organism>
<proteinExistence type="inferred from homology"/>
<keyword id="KW-0997">Cell inner membrane</keyword>
<keyword id="KW-1003">Cell membrane</keyword>
<keyword id="KW-0472">Membrane</keyword>
<keyword id="KW-0808">Transferase</keyword>
<keyword id="KW-0812">Transmembrane</keyword>
<keyword id="KW-1133">Transmembrane helix</keyword>
<gene>
    <name evidence="1" type="primary">lgt</name>
    <name type="ordered locus">P9215_05401</name>
</gene>
<name>LGT_PROM2</name>
<evidence type="ECO:0000255" key="1">
    <source>
        <dbReference type="HAMAP-Rule" id="MF_01147"/>
    </source>
</evidence>
<reference key="1">
    <citation type="journal article" date="2007" name="PLoS Genet.">
        <title>Patterns and implications of gene gain and loss in the evolution of Prochlorococcus.</title>
        <authorList>
            <person name="Kettler G.C."/>
            <person name="Martiny A.C."/>
            <person name="Huang K."/>
            <person name="Zucker J."/>
            <person name="Coleman M.L."/>
            <person name="Rodrigue S."/>
            <person name="Chen F."/>
            <person name="Lapidus A."/>
            <person name="Ferriera S."/>
            <person name="Johnson J."/>
            <person name="Steglich C."/>
            <person name="Church G.M."/>
            <person name="Richardson P."/>
            <person name="Chisholm S.W."/>
        </authorList>
    </citation>
    <scope>NUCLEOTIDE SEQUENCE [LARGE SCALE GENOMIC DNA]</scope>
    <source>
        <strain>MIT 9215</strain>
    </source>
</reference>
<comment type="function">
    <text evidence="1">Catalyzes the transfer of the diacylglyceryl group from phosphatidylglycerol to the sulfhydryl group of the N-terminal cysteine of a prolipoprotein, the first step in the formation of mature lipoproteins.</text>
</comment>
<comment type="catalytic activity">
    <reaction evidence="1">
        <text>L-cysteinyl-[prolipoprotein] + a 1,2-diacyl-sn-glycero-3-phospho-(1'-sn-glycerol) = an S-1,2-diacyl-sn-glyceryl-L-cysteinyl-[prolipoprotein] + sn-glycerol 1-phosphate + H(+)</text>
        <dbReference type="Rhea" id="RHEA:56712"/>
        <dbReference type="Rhea" id="RHEA-COMP:14679"/>
        <dbReference type="Rhea" id="RHEA-COMP:14680"/>
        <dbReference type="ChEBI" id="CHEBI:15378"/>
        <dbReference type="ChEBI" id="CHEBI:29950"/>
        <dbReference type="ChEBI" id="CHEBI:57685"/>
        <dbReference type="ChEBI" id="CHEBI:64716"/>
        <dbReference type="ChEBI" id="CHEBI:140658"/>
        <dbReference type="EC" id="2.5.1.145"/>
    </reaction>
</comment>
<comment type="pathway">
    <text evidence="1">Protein modification; lipoprotein biosynthesis (diacylglyceryl transfer).</text>
</comment>
<comment type="subcellular location">
    <subcellularLocation>
        <location evidence="1">Cell inner membrane</location>
        <topology evidence="1">Multi-pass membrane protein</topology>
    </subcellularLocation>
</comment>
<comment type="similarity">
    <text evidence="1">Belongs to the Lgt family.</text>
</comment>
<feature type="chain" id="PRO_1000065479" description="Phosphatidylglycerol--prolipoprotein diacylglyceryl transferase">
    <location>
        <begin position="1"/>
        <end position="297"/>
    </location>
</feature>
<feature type="transmembrane region" description="Helical" evidence="1">
    <location>
        <begin position="20"/>
        <end position="40"/>
    </location>
</feature>
<feature type="transmembrane region" description="Helical" evidence="1">
    <location>
        <begin position="57"/>
        <end position="77"/>
    </location>
</feature>
<feature type="transmembrane region" description="Helical" evidence="1">
    <location>
        <begin position="105"/>
        <end position="125"/>
    </location>
</feature>
<feature type="transmembrane region" description="Helical" evidence="1">
    <location>
        <begin position="133"/>
        <end position="153"/>
    </location>
</feature>
<feature type="transmembrane region" description="Helical" evidence="1">
    <location>
        <begin position="193"/>
        <end position="213"/>
    </location>
</feature>
<feature type="transmembrane region" description="Helical" evidence="1">
    <location>
        <begin position="225"/>
        <end position="245"/>
    </location>
</feature>
<feature type="transmembrane region" description="Helical" evidence="1">
    <location>
        <begin position="266"/>
        <end position="286"/>
    </location>
</feature>
<feature type="binding site" evidence="1">
    <location>
        <position position="154"/>
    </location>
    <ligand>
        <name>a 1,2-diacyl-sn-glycero-3-phospho-(1'-sn-glycerol)</name>
        <dbReference type="ChEBI" id="CHEBI:64716"/>
    </ligand>
</feature>
<protein>
    <recommendedName>
        <fullName evidence="1">Phosphatidylglycerol--prolipoprotein diacylglyceryl transferase</fullName>
        <ecNumber evidence="1">2.5.1.145</ecNumber>
    </recommendedName>
</protein>